<organism>
    <name type="scientific">Leifsonia xyli subsp. xyli (strain CTCB07)</name>
    <dbReference type="NCBI Taxonomy" id="281090"/>
    <lineage>
        <taxon>Bacteria</taxon>
        <taxon>Bacillati</taxon>
        <taxon>Actinomycetota</taxon>
        <taxon>Actinomycetes</taxon>
        <taxon>Micrococcales</taxon>
        <taxon>Microbacteriaceae</taxon>
        <taxon>Leifsonia</taxon>
    </lineage>
</organism>
<keyword id="KW-0963">Cytoplasm</keyword>
<keyword id="KW-0350">Heme biosynthesis</keyword>
<keyword id="KW-0408">Iron</keyword>
<keyword id="KW-0456">Lyase</keyword>
<keyword id="KW-0479">Metal-binding</keyword>
<keyword id="KW-0627">Porphyrin biosynthesis</keyword>
<keyword id="KW-1185">Reference proteome</keyword>
<sequence>MLGATPAAAGVAEHVTEPVAYDAILLAGFGGPEGQDDVIPFLRNVTRGRGILDERLEEVAQHYRHFGGVSPINDQNRALKAALEAELASRGIDLPVLWGNRNWDPYLADALTEADQRGFTKLIAVATSAYSSYSSCRQYREDFARALRETGLEGRIQIDKVRQFFDHPGFVEPFIEGVKNAVEELRERAPEIHPATGVRILFSTHSIPSTDAGKSGPSGRPDSGEPWGEGGAYAAQHLAVAEIVSHEATGGTIGWDLVYQSRSGPPSMPWLEPDINDRIAELPELGVKAIIIVPLGFVSDHMEVLWDLDTEAMESSEENGLLAVRVPTPGTHAKYVKGLVDLVLERRDGLPVAQRPSLTTLGPWYDVCRPGCCENVRLGFKPAVAGLTP</sequence>
<proteinExistence type="inferred from homology"/>
<protein>
    <recommendedName>
        <fullName evidence="1">Coproporphyrin III ferrochelatase</fullName>
        <ecNumber evidence="1">4.99.1.9</ecNumber>
    </recommendedName>
</protein>
<gene>
    <name evidence="1" type="primary">cpfC</name>
    <name type="ordered locus">Lxx01090</name>
</gene>
<name>CPFC_LEIXX</name>
<evidence type="ECO:0000255" key="1">
    <source>
        <dbReference type="HAMAP-Rule" id="MF_00323"/>
    </source>
</evidence>
<evidence type="ECO:0000256" key="2">
    <source>
        <dbReference type="SAM" id="MobiDB-lite"/>
    </source>
</evidence>
<reference key="1">
    <citation type="journal article" date="2004" name="Mol. Plant Microbe Interact.">
        <title>The genome sequence of the Gram-positive sugarcane pathogen Leifsonia xyli subsp. xyli.</title>
        <authorList>
            <person name="Monteiro-Vitorello C.B."/>
            <person name="Camargo L.E.A."/>
            <person name="Van Sluys M.A."/>
            <person name="Kitajima J.P."/>
            <person name="Truffi D."/>
            <person name="do Amaral A.M."/>
            <person name="Harakava R."/>
            <person name="de Oliveira J.C.F."/>
            <person name="Wood D."/>
            <person name="de Oliveira M.C."/>
            <person name="Miyaki C.Y."/>
            <person name="Takita M.A."/>
            <person name="da Silva A.C.R."/>
            <person name="Furlan L.R."/>
            <person name="Carraro D.M."/>
            <person name="Camarotte G."/>
            <person name="Almeida N.F. Jr."/>
            <person name="Carrer H."/>
            <person name="Coutinho L.L."/>
            <person name="El-Dorry H.A."/>
            <person name="Ferro M.I.T."/>
            <person name="Gagliardi P.R."/>
            <person name="Giglioti E."/>
            <person name="Goldman M.H.S."/>
            <person name="Goldman G.H."/>
            <person name="Kimura E.T."/>
            <person name="Ferro E.S."/>
            <person name="Kuramae E.E."/>
            <person name="Lemos E.G.M."/>
            <person name="Lemos M.V.F."/>
            <person name="Mauro S.M.Z."/>
            <person name="Machado M.A."/>
            <person name="Marino C.L."/>
            <person name="Menck C.F."/>
            <person name="Nunes L.R."/>
            <person name="Oliveira R.C."/>
            <person name="Pereira G.G."/>
            <person name="Siqueira W."/>
            <person name="de Souza A.A."/>
            <person name="Tsai S.M."/>
            <person name="Zanca A.S."/>
            <person name="Simpson A.J.G."/>
            <person name="Brumbley S.M."/>
            <person name="Setubal J.C."/>
        </authorList>
    </citation>
    <scope>NUCLEOTIDE SEQUENCE [LARGE SCALE GENOMIC DNA]</scope>
    <source>
        <strain>CTCB07</strain>
    </source>
</reference>
<comment type="function">
    <text evidence="1">Involved in coproporphyrin-dependent heme b biosynthesis. Catalyzes the insertion of ferrous iron into coproporphyrin III to form Fe-coproporphyrin III.</text>
</comment>
<comment type="catalytic activity">
    <reaction evidence="1">
        <text>Fe-coproporphyrin III + 2 H(+) = coproporphyrin III + Fe(2+)</text>
        <dbReference type="Rhea" id="RHEA:49572"/>
        <dbReference type="ChEBI" id="CHEBI:15378"/>
        <dbReference type="ChEBI" id="CHEBI:29033"/>
        <dbReference type="ChEBI" id="CHEBI:68438"/>
        <dbReference type="ChEBI" id="CHEBI:131725"/>
        <dbReference type="EC" id="4.99.1.9"/>
    </reaction>
    <physiologicalReaction direction="right-to-left" evidence="1">
        <dbReference type="Rhea" id="RHEA:49574"/>
    </physiologicalReaction>
</comment>
<comment type="pathway">
    <text evidence="1">Porphyrin-containing compound metabolism; protoheme biosynthesis.</text>
</comment>
<comment type="subcellular location">
    <subcellularLocation>
        <location evidence="1">Cytoplasm</location>
    </subcellularLocation>
</comment>
<comment type="similarity">
    <text evidence="1">Belongs to the ferrochelatase family.</text>
</comment>
<dbReference type="EC" id="4.99.1.9" evidence="1"/>
<dbReference type="EMBL" id="AE016822">
    <property type="protein sequence ID" value="AAT88193.1"/>
    <property type="molecule type" value="Genomic_DNA"/>
</dbReference>
<dbReference type="SMR" id="Q6AHF2"/>
<dbReference type="STRING" id="281090.Lxx01090"/>
<dbReference type="KEGG" id="lxx:Lxx01090"/>
<dbReference type="eggNOG" id="COG0276">
    <property type="taxonomic scope" value="Bacteria"/>
</dbReference>
<dbReference type="HOGENOM" id="CLU_018884_2_0_11"/>
<dbReference type="UniPathway" id="UPA00252"/>
<dbReference type="Proteomes" id="UP000001306">
    <property type="component" value="Chromosome"/>
</dbReference>
<dbReference type="GO" id="GO:0005737">
    <property type="term" value="C:cytoplasm"/>
    <property type="evidence" value="ECO:0007669"/>
    <property type="project" value="UniProtKB-SubCell"/>
</dbReference>
<dbReference type="GO" id="GO:0004325">
    <property type="term" value="F:ferrochelatase activity"/>
    <property type="evidence" value="ECO:0007669"/>
    <property type="project" value="UniProtKB-UniRule"/>
</dbReference>
<dbReference type="GO" id="GO:0046872">
    <property type="term" value="F:metal ion binding"/>
    <property type="evidence" value="ECO:0007669"/>
    <property type="project" value="UniProtKB-KW"/>
</dbReference>
<dbReference type="GO" id="GO:0006783">
    <property type="term" value="P:heme biosynthetic process"/>
    <property type="evidence" value="ECO:0007669"/>
    <property type="project" value="UniProtKB-UniRule"/>
</dbReference>
<dbReference type="CDD" id="cd00419">
    <property type="entry name" value="Ferrochelatase_C"/>
    <property type="match status" value="1"/>
</dbReference>
<dbReference type="CDD" id="cd03411">
    <property type="entry name" value="Ferrochelatase_N"/>
    <property type="match status" value="1"/>
</dbReference>
<dbReference type="Gene3D" id="3.40.50.1400">
    <property type="match status" value="2"/>
</dbReference>
<dbReference type="HAMAP" id="MF_00323">
    <property type="entry name" value="Ferrochelatase"/>
    <property type="match status" value="1"/>
</dbReference>
<dbReference type="InterPro" id="IPR001015">
    <property type="entry name" value="Ferrochelatase"/>
</dbReference>
<dbReference type="InterPro" id="IPR033644">
    <property type="entry name" value="Ferrochelatase_C"/>
</dbReference>
<dbReference type="InterPro" id="IPR033659">
    <property type="entry name" value="Ferrochelatase_N"/>
</dbReference>
<dbReference type="NCBIfam" id="TIGR00109">
    <property type="entry name" value="hemH"/>
    <property type="match status" value="1"/>
</dbReference>
<dbReference type="NCBIfam" id="NF000689">
    <property type="entry name" value="PRK00035.2-1"/>
    <property type="match status" value="1"/>
</dbReference>
<dbReference type="PANTHER" id="PTHR11108">
    <property type="entry name" value="FERROCHELATASE"/>
    <property type="match status" value="1"/>
</dbReference>
<dbReference type="PANTHER" id="PTHR11108:SF1">
    <property type="entry name" value="FERROCHELATASE, MITOCHONDRIAL"/>
    <property type="match status" value="1"/>
</dbReference>
<dbReference type="Pfam" id="PF00762">
    <property type="entry name" value="Ferrochelatase"/>
    <property type="match status" value="1"/>
</dbReference>
<dbReference type="SUPFAM" id="SSF53800">
    <property type="entry name" value="Chelatase"/>
    <property type="match status" value="1"/>
</dbReference>
<feature type="chain" id="PRO_0000175157" description="Coproporphyrin III ferrochelatase">
    <location>
        <begin position="1"/>
        <end position="389"/>
    </location>
</feature>
<feature type="region of interest" description="Disordered" evidence="2">
    <location>
        <begin position="207"/>
        <end position="229"/>
    </location>
</feature>
<feature type="binding site" evidence="1">
    <location>
        <position position="70"/>
    </location>
    <ligand>
        <name>Fe-coproporphyrin III</name>
        <dbReference type="ChEBI" id="CHEBI:68438"/>
    </ligand>
</feature>
<feature type="binding site" evidence="1">
    <location>
        <position position="139"/>
    </location>
    <ligand>
        <name>Fe-coproporphyrin III</name>
        <dbReference type="ChEBI" id="CHEBI:68438"/>
    </ligand>
</feature>
<feature type="binding site" evidence="1">
    <location>
        <position position="205"/>
    </location>
    <ligand>
        <name>Fe(2+)</name>
        <dbReference type="ChEBI" id="CHEBI:29033"/>
    </ligand>
</feature>
<feature type="binding site" evidence="1">
    <location>
        <position position="303"/>
    </location>
    <ligand>
        <name>Fe(2+)</name>
        <dbReference type="ChEBI" id="CHEBI:29033"/>
    </ligand>
</feature>
<accession>Q6AHF2</accession>